<reference key="1">
    <citation type="submission" date="2006-12" db="EMBL/GenBank/DDBJ databases">
        <title>Complete sequence of chromosome 1 of Verminephrobacter eiseniae EF01-2.</title>
        <authorList>
            <person name="Copeland A."/>
            <person name="Lucas S."/>
            <person name="Lapidus A."/>
            <person name="Barry K."/>
            <person name="Detter J.C."/>
            <person name="Glavina del Rio T."/>
            <person name="Dalin E."/>
            <person name="Tice H."/>
            <person name="Pitluck S."/>
            <person name="Chertkov O."/>
            <person name="Brettin T."/>
            <person name="Bruce D."/>
            <person name="Han C."/>
            <person name="Tapia R."/>
            <person name="Gilna P."/>
            <person name="Schmutz J."/>
            <person name="Larimer F."/>
            <person name="Land M."/>
            <person name="Hauser L."/>
            <person name="Kyrpides N."/>
            <person name="Kim E."/>
            <person name="Stahl D."/>
            <person name="Richardson P."/>
        </authorList>
    </citation>
    <scope>NUCLEOTIDE SEQUENCE [LARGE SCALE GENOMIC DNA]</scope>
    <source>
        <strain>EF01-2</strain>
    </source>
</reference>
<dbReference type="EC" id="3.5.1.5" evidence="1"/>
<dbReference type="EMBL" id="CP000542">
    <property type="protein sequence ID" value="ABM57483.1"/>
    <property type="molecule type" value="Genomic_DNA"/>
</dbReference>
<dbReference type="RefSeq" id="WP_011809490.1">
    <property type="nucleotide sequence ID" value="NC_008786.1"/>
</dbReference>
<dbReference type="SMR" id="A1WIM6"/>
<dbReference type="STRING" id="391735.Veis_1729"/>
<dbReference type="GeneID" id="76460334"/>
<dbReference type="KEGG" id="vei:Veis_1729"/>
<dbReference type="eggNOG" id="COG0831">
    <property type="taxonomic scope" value="Bacteria"/>
</dbReference>
<dbReference type="HOGENOM" id="CLU_145825_1_0_4"/>
<dbReference type="OrthoDB" id="9797217at2"/>
<dbReference type="UniPathway" id="UPA00258">
    <property type="reaction ID" value="UER00370"/>
</dbReference>
<dbReference type="Proteomes" id="UP000000374">
    <property type="component" value="Chromosome"/>
</dbReference>
<dbReference type="GO" id="GO:0005737">
    <property type="term" value="C:cytoplasm"/>
    <property type="evidence" value="ECO:0007669"/>
    <property type="project" value="UniProtKB-SubCell"/>
</dbReference>
<dbReference type="GO" id="GO:0016151">
    <property type="term" value="F:nickel cation binding"/>
    <property type="evidence" value="ECO:0007669"/>
    <property type="project" value="InterPro"/>
</dbReference>
<dbReference type="GO" id="GO:0009039">
    <property type="term" value="F:urease activity"/>
    <property type="evidence" value="ECO:0007669"/>
    <property type="project" value="UniProtKB-UniRule"/>
</dbReference>
<dbReference type="GO" id="GO:0043419">
    <property type="term" value="P:urea catabolic process"/>
    <property type="evidence" value="ECO:0007669"/>
    <property type="project" value="UniProtKB-UniRule"/>
</dbReference>
<dbReference type="CDD" id="cd00390">
    <property type="entry name" value="Urease_gamma"/>
    <property type="match status" value="1"/>
</dbReference>
<dbReference type="Gene3D" id="3.30.280.10">
    <property type="entry name" value="Urease, gamma-like subunit"/>
    <property type="match status" value="1"/>
</dbReference>
<dbReference type="HAMAP" id="MF_00739">
    <property type="entry name" value="Urease_gamma"/>
    <property type="match status" value="1"/>
</dbReference>
<dbReference type="InterPro" id="IPR012010">
    <property type="entry name" value="Urease_gamma"/>
</dbReference>
<dbReference type="InterPro" id="IPR002026">
    <property type="entry name" value="Urease_gamma/gamma-beta_su"/>
</dbReference>
<dbReference type="InterPro" id="IPR036463">
    <property type="entry name" value="Urease_gamma_sf"/>
</dbReference>
<dbReference type="InterPro" id="IPR050069">
    <property type="entry name" value="Urease_subunit"/>
</dbReference>
<dbReference type="NCBIfam" id="NF009712">
    <property type="entry name" value="PRK13241.1"/>
    <property type="match status" value="1"/>
</dbReference>
<dbReference type="NCBIfam" id="TIGR00193">
    <property type="entry name" value="urease_gam"/>
    <property type="match status" value="1"/>
</dbReference>
<dbReference type="PANTHER" id="PTHR33569">
    <property type="entry name" value="UREASE"/>
    <property type="match status" value="1"/>
</dbReference>
<dbReference type="PANTHER" id="PTHR33569:SF1">
    <property type="entry name" value="UREASE"/>
    <property type="match status" value="1"/>
</dbReference>
<dbReference type="Pfam" id="PF00547">
    <property type="entry name" value="Urease_gamma"/>
    <property type="match status" value="1"/>
</dbReference>
<dbReference type="PIRSF" id="PIRSF001223">
    <property type="entry name" value="Urease_gamma"/>
    <property type="match status" value="1"/>
</dbReference>
<dbReference type="SUPFAM" id="SSF54111">
    <property type="entry name" value="Urease, gamma-subunit"/>
    <property type="match status" value="1"/>
</dbReference>
<accession>A1WIM6</accession>
<organism>
    <name type="scientific">Verminephrobacter eiseniae (strain EF01-2)</name>
    <dbReference type="NCBI Taxonomy" id="391735"/>
    <lineage>
        <taxon>Bacteria</taxon>
        <taxon>Pseudomonadati</taxon>
        <taxon>Pseudomonadota</taxon>
        <taxon>Betaproteobacteria</taxon>
        <taxon>Burkholderiales</taxon>
        <taxon>Comamonadaceae</taxon>
        <taxon>Verminephrobacter</taxon>
    </lineage>
</organism>
<keyword id="KW-0963">Cytoplasm</keyword>
<keyword id="KW-0378">Hydrolase</keyword>
<keyword id="KW-1185">Reference proteome</keyword>
<proteinExistence type="inferred from homology"/>
<gene>
    <name evidence="1" type="primary">ureA</name>
    <name type="ordered locus">Veis_1729</name>
</gene>
<comment type="catalytic activity">
    <reaction evidence="1">
        <text>urea + 2 H2O + H(+) = hydrogencarbonate + 2 NH4(+)</text>
        <dbReference type="Rhea" id="RHEA:20557"/>
        <dbReference type="ChEBI" id="CHEBI:15377"/>
        <dbReference type="ChEBI" id="CHEBI:15378"/>
        <dbReference type="ChEBI" id="CHEBI:16199"/>
        <dbReference type="ChEBI" id="CHEBI:17544"/>
        <dbReference type="ChEBI" id="CHEBI:28938"/>
        <dbReference type="EC" id="3.5.1.5"/>
    </reaction>
</comment>
<comment type="pathway">
    <text evidence="1">Nitrogen metabolism; urea degradation; CO(2) and NH(3) from urea (urease route): step 1/1.</text>
</comment>
<comment type="subunit">
    <text evidence="1">Heterotrimer of UreA (gamma), UreB (beta) and UreC (alpha) subunits. Three heterotrimers associate to form the active enzyme.</text>
</comment>
<comment type="subcellular location">
    <subcellularLocation>
        <location evidence="1">Cytoplasm</location>
    </subcellularLocation>
</comment>
<comment type="similarity">
    <text evidence="1">Belongs to the urease gamma subunit family.</text>
</comment>
<sequence length="100" mass="10835">MELTPREKDKLLIFTAALLAERRKARGLKLNHPEAVALISAAIMEGARDGKTVAELMSAGRTLLSRADVMEGIAEMIPDIQVEATFPDGSKLVTVHQPIV</sequence>
<feature type="chain" id="PRO_1000046376" description="Urease subunit gamma">
    <location>
        <begin position="1"/>
        <end position="100"/>
    </location>
</feature>
<evidence type="ECO:0000255" key="1">
    <source>
        <dbReference type="HAMAP-Rule" id="MF_00739"/>
    </source>
</evidence>
<name>URE3_VEREI</name>
<protein>
    <recommendedName>
        <fullName evidence="1">Urease subunit gamma</fullName>
        <ecNumber evidence="1">3.5.1.5</ecNumber>
    </recommendedName>
    <alternativeName>
        <fullName evidence="1">Urea amidohydrolase subunit gamma</fullName>
    </alternativeName>
</protein>